<organism>
    <name type="scientific">Bacillus cereus (strain ZK / E33L)</name>
    <dbReference type="NCBI Taxonomy" id="288681"/>
    <lineage>
        <taxon>Bacteria</taxon>
        <taxon>Bacillati</taxon>
        <taxon>Bacillota</taxon>
        <taxon>Bacilli</taxon>
        <taxon>Bacillales</taxon>
        <taxon>Bacillaceae</taxon>
        <taxon>Bacillus</taxon>
        <taxon>Bacillus cereus group</taxon>
    </lineage>
</organism>
<reference key="1">
    <citation type="journal article" date="2006" name="J. Bacteriol.">
        <title>Pathogenomic sequence analysis of Bacillus cereus and Bacillus thuringiensis isolates closely related to Bacillus anthracis.</title>
        <authorList>
            <person name="Han C.S."/>
            <person name="Xie G."/>
            <person name="Challacombe J.F."/>
            <person name="Altherr M.R."/>
            <person name="Bhotika S.S."/>
            <person name="Bruce D."/>
            <person name="Campbell C.S."/>
            <person name="Campbell M.L."/>
            <person name="Chen J."/>
            <person name="Chertkov O."/>
            <person name="Cleland C."/>
            <person name="Dimitrijevic M."/>
            <person name="Doggett N.A."/>
            <person name="Fawcett J.J."/>
            <person name="Glavina T."/>
            <person name="Goodwin L.A."/>
            <person name="Hill K.K."/>
            <person name="Hitchcock P."/>
            <person name="Jackson P.J."/>
            <person name="Keim P."/>
            <person name="Kewalramani A.R."/>
            <person name="Longmire J."/>
            <person name="Lucas S."/>
            <person name="Malfatti S."/>
            <person name="McMurry K."/>
            <person name="Meincke L.J."/>
            <person name="Misra M."/>
            <person name="Moseman B.L."/>
            <person name="Mundt M."/>
            <person name="Munk A.C."/>
            <person name="Okinaka R.T."/>
            <person name="Parson-Quintana B."/>
            <person name="Reilly L.P."/>
            <person name="Richardson P."/>
            <person name="Robinson D.L."/>
            <person name="Rubin E."/>
            <person name="Saunders E."/>
            <person name="Tapia R."/>
            <person name="Tesmer J.G."/>
            <person name="Thayer N."/>
            <person name="Thompson L.S."/>
            <person name="Tice H."/>
            <person name="Ticknor L.O."/>
            <person name="Wills P.L."/>
            <person name="Brettin T.S."/>
            <person name="Gilna P."/>
        </authorList>
    </citation>
    <scope>NUCLEOTIDE SEQUENCE [LARGE SCALE GENOMIC DNA]</scope>
    <source>
        <strain>ZK / E33L</strain>
    </source>
</reference>
<evidence type="ECO:0000255" key="1">
    <source>
        <dbReference type="HAMAP-Rule" id="MF_00160"/>
    </source>
</evidence>
<gene>
    <name evidence="1" type="primary">serC</name>
    <name type="ordered locus">BCE33L2969</name>
</gene>
<name>SERC_BACCZ</name>
<protein>
    <recommendedName>
        <fullName evidence="1">Phosphoserine aminotransferase</fullName>
        <ecNumber evidence="1">2.6.1.52</ecNumber>
    </recommendedName>
    <alternativeName>
        <fullName evidence="1">Phosphohydroxythreonine aminotransferase</fullName>
        <shortName evidence="1">PSAT</shortName>
    </alternativeName>
</protein>
<feature type="chain" id="PRO_0000150146" description="Phosphoserine aminotransferase">
    <location>
        <begin position="1"/>
        <end position="360"/>
    </location>
</feature>
<feature type="binding site" evidence="1">
    <location>
        <position position="42"/>
    </location>
    <ligand>
        <name>L-glutamate</name>
        <dbReference type="ChEBI" id="CHEBI:29985"/>
    </ligand>
</feature>
<feature type="binding site" evidence="1">
    <location>
        <begin position="76"/>
        <end position="77"/>
    </location>
    <ligand>
        <name>pyridoxal 5'-phosphate</name>
        <dbReference type="ChEBI" id="CHEBI:597326"/>
    </ligand>
</feature>
<feature type="binding site" evidence="1">
    <location>
        <position position="102"/>
    </location>
    <ligand>
        <name>pyridoxal 5'-phosphate</name>
        <dbReference type="ChEBI" id="CHEBI:597326"/>
    </ligand>
</feature>
<feature type="binding site" evidence="1">
    <location>
        <position position="152"/>
    </location>
    <ligand>
        <name>pyridoxal 5'-phosphate</name>
        <dbReference type="ChEBI" id="CHEBI:597326"/>
    </ligand>
</feature>
<feature type="binding site" evidence="1">
    <location>
        <position position="172"/>
    </location>
    <ligand>
        <name>pyridoxal 5'-phosphate</name>
        <dbReference type="ChEBI" id="CHEBI:597326"/>
    </ligand>
</feature>
<feature type="binding site" evidence="1">
    <location>
        <position position="195"/>
    </location>
    <ligand>
        <name>pyridoxal 5'-phosphate</name>
        <dbReference type="ChEBI" id="CHEBI:597326"/>
    </ligand>
</feature>
<feature type="binding site" evidence="1">
    <location>
        <begin position="237"/>
        <end position="238"/>
    </location>
    <ligand>
        <name>pyridoxal 5'-phosphate</name>
        <dbReference type="ChEBI" id="CHEBI:597326"/>
    </ligand>
</feature>
<feature type="modified residue" description="N6-(pyridoxal phosphate)lysine" evidence="1">
    <location>
        <position position="196"/>
    </location>
</feature>
<comment type="function">
    <text evidence="1">Catalyzes the reversible conversion of 3-phosphohydroxypyruvate to phosphoserine and of 3-hydroxy-2-oxo-4-phosphonooxybutanoate to phosphohydroxythreonine.</text>
</comment>
<comment type="catalytic activity">
    <reaction evidence="1">
        <text>O-phospho-L-serine + 2-oxoglutarate = 3-phosphooxypyruvate + L-glutamate</text>
        <dbReference type="Rhea" id="RHEA:14329"/>
        <dbReference type="ChEBI" id="CHEBI:16810"/>
        <dbReference type="ChEBI" id="CHEBI:18110"/>
        <dbReference type="ChEBI" id="CHEBI:29985"/>
        <dbReference type="ChEBI" id="CHEBI:57524"/>
        <dbReference type="EC" id="2.6.1.52"/>
    </reaction>
</comment>
<comment type="catalytic activity">
    <reaction evidence="1">
        <text>4-(phosphooxy)-L-threonine + 2-oxoglutarate = (R)-3-hydroxy-2-oxo-4-phosphooxybutanoate + L-glutamate</text>
        <dbReference type="Rhea" id="RHEA:16573"/>
        <dbReference type="ChEBI" id="CHEBI:16810"/>
        <dbReference type="ChEBI" id="CHEBI:29985"/>
        <dbReference type="ChEBI" id="CHEBI:58452"/>
        <dbReference type="ChEBI" id="CHEBI:58538"/>
        <dbReference type="EC" id="2.6.1.52"/>
    </reaction>
</comment>
<comment type="cofactor">
    <cofactor evidence="1">
        <name>pyridoxal 5'-phosphate</name>
        <dbReference type="ChEBI" id="CHEBI:597326"/>
    </cofactor>
    <text evidence="1">Binds 1 pyridoxal phosphate per subunit.</text>
</comment>
<comment type="pathway">
    <text evidence="1">Amino-acid biosynthesis; L-serine biosynthesis; L-serine from 3-phospho-D-glycerate: step 2/3.</text>
</comment>
<comment type="subunit">
    <text evidence="1">Homodimer.</text>
</comment>
<comment type="subcellular location">
    <subcellularLocation>
        <location evidence="1">Cytoplasm</location>
    </subcellularLocation>
</comment>
<comment type="similarity">
    <text evidence="1">Belongs to the class-V pyridoxal-phosphate-dependent aminotransferase family. SerC subfamily.</text>
</comment>
<keyword id="KW-0028">Amino-acid biosynthesis</keyword>
<keyword id="KW-0032">Aminotransferase</keyword>
<keyword id="KW-0963">Cytoplasm</keyword>
<keyword id="KW-0663">Pyridoxal phosphate</keyword>
<keyword id="KW-0718">Serine biosynthesis</keyword>
<keyword id="KW-0808">Transferase</keyword>
<proteinExistence type="inferred from homology"/>
<sequence length="360" mass="40447">MERVYNFSAGPSILPLPVLEKVQKELVNYNGTGMSIMEMSHRSSYFQSIIDEASNLLRELMNIPNEYDVLFLQGGASLQFSMIPLNLMNTYKKAGYVLTGSWSKKALQEAEKVGEVQVIASSENEKFTTIPKLDGLLGDEKLDYVHITTNNTIEGTKYVDIPRVDKVPLVADMSSNILSERYDVSKFGLIYAGAQKNLGPAGLTIAIIKRDLIGGADRYCPTMLNYETYSKNNSLYNTPPSFSIYVTKLVLEWLKEQGGVSAIEEQNKMKSSLLYNFLDESKLFTSPVDPTYRSLMNIPFTTPSEELNNEFLQKAKERGLVTLKGHRSVGGMRASIYNAMPVQGVQQLVNYMKEFELENR</sequence>
<accession>Q638W1</accession>
<dbReference type="EC" id="2.6.1.52" evidence="1"/>
<dbReference type="EMBL" id="CP000001">
    <property type="protein sequence ID" value="AAU17292.1"/>
    <property type="molecule type" value="Genomic_DNA"/>
</dbReference>
<dbReference type="RefSeq" id="WP_011198855.1">
    <property type="nucleotide sequence ID" value="NC_006274.1"/>
</dbReference>
<dbReference type="SMR" id="Q638W1"/>
<dbReference type="KEGG" id="bcz:BCE33L2969"/>
<dbReference type="PATRIC" id="fig|288681.22.peg.2479"/>
<dbReference type="UniPathway" id="UPA00135">
    <property type="reaction ID" value="UER00197"/>
</dbReference>
<dbReference type="Proteomes" id="UP000002612">
    <property type="component" value="Chromosome"/>
</dbReference>
<dbReference type="GO" id="GO:0005737">
    <property type="term" value="C:cytoplasm"/>
    <property type="evidence" value="ECO:0007669"/>
    <property type="project" value="UniProtKB-SubCell"/>
</dbReference>
<dbReference type="GO" id="GO:0004648">
    <property type="term" value="F:O-phospho-L-serine:2-oxoglutarate aminotransferase activity"/>
    <property type="evidence" value="ECO:0007669"/>
    <property type="project" value="UniProtKB-UniRule"/>
</dbReference>
<dbReference type="GO" id="GO:0030170">
    <property type="term" value="F:pyridoxal phosphate binding"/>
    <property type="evidence" value="ECO:0007669"/>
    <property type="project" value="UniProtKB-UniRule"/>
</dbReference>
<dbReference type="GO" id="GO:0006564">
    <property type="term" value="P:L-serine biosynthetic process"/>
    <property type="evidence" value="ECO:0007669"/>
    <property type="project" value="UniProtKB-UniRule"/>
</dbReference>
<dbReference type="CDD" id="cd00611">
    <property type="entry name" value="PSAT_like"/>
    <property type="match status" value="1"/>
</dbReference>
<dbReference type="FunFam" id="3.40.640.10:FF:000010">
    <property type="entry name" value="Phosphoserine aminotransferase"/>
    <property type="match status" value="1"/>
</dbReference>
<dbReference type="FunFam" id="3.90.1150.10:FF:000006">
    <property type="entry name" value="Phosphoserine aminotransferase"/>
    <property type="match status" value="1"/>
</dbReference>
<dbReference type="Gene3D" id="3.90.1150.10">
    <property type="entry name" value="Aspartate Aminotransferase, domain 1"/>
    <property type="match status" value="1"/>
</dbReference>
<dbReference type="Gene3D" id="3.40.640.10">
    <property type="entry name" value="Type I PLP-dependent aspartate aminotransferase-like (Major domain)"/>
    <property type="match status" value="1"/>
</dbReference>
<dbReference type="HAMAP" id="MF_00160">
    <property type="entry name" value="SerC_aminotrans_5"/>
    <property type="match status" value="1"/>
</dbReference>
<dbReference type="InterPro" id="IPR000192">
    <property type="entry name" value="Aminotrans_V_dom"/>
</dbReference>
<dbReference type="InterPro" id="IPR020578">
    <property type="entry name" value="Aminotrans_V_PyrdxlP_BS"/>
</dbReference>
<dbReference type="InterPro" id="IPR022278">
    <property type="entry name" value="Pser_aminoTfrase"/>
</dbReference>
<dbReference type="InterPro" id="IPR015424">
    <property type="entry name" value="PyrdxlP-dep_Trfase"/>
</dbReference>
<dbReference type="InterPro" id="IPR015421">
    <property type="entry name" value="PyrdxlP-dep_Trfase_major"/>
</dbReference>
<dbReference type="InterPro" id="IPR015422">
    <property type="entry name" value="PyrdxlP-dep_Trfase_small"/>
</dbReference>
<dbReference type="NCBIfam" id="NF003764">
    <property type="entry name" value="PRK05355.1"/>
    <property type="match status" value="1"/>
</dbReference>
<dbReference type="NCBIfam" id="TIGR01364">
    <property type="entry name" value="serC_1"/>
    <property type="match status" value="1"/>
</dbReference>
<dbReference type="PANTHER" id="PTHR43247">
    <property type="entry name" value="PHOSPHOSERINE AMINOTRANSFERASE"/>
    <property type="match status" value="1"/>
</dbReference>
<dbReference type="PANTHER" id="PTHR43247:SF1">
    <property type="entry name" value="PHOSPHOSERINE AMINOTRANSFERASE"/>
    <property type="match status" value="1"/>
</dbReference>
<dbReference type="Pfam" id="PF00266">
    <property type="entry name" value="Aminotran_5"/>
    <property type="match status" value="1"/>
</dbReference>
<dbReference type="PIRSF" id="PIRSF000525">
    <property type="entry name" value="SerC"/>
    <property type="match status" value="1"/>
</dbReference>
<dbReference type="SUPFAM" id="SSF53383">
    <property type="entry name" value="PLP-dependent transferases"/>
    <property type="match status" value="1"/>
</dbReference>
<dbReference type="PROSITE" id="PS00595">
    <property type="entry name" value="AA_TRANSFER_CLASS_5"/>
    <property type="match status" value="1"/>
</dbReference>